<protein>
    <recommendedName>
        <fullName evidence="1">Large ribosomal subunit protein uL18</fullName>
    </recommendedName>
    <alternativeName>
        <fullName evidence="2">50S ribosomal protein L18</fullName>
    </alternativeName>
</protein>
<proteinExistence type="inferred from homology"/>
<gene>
    <name evidence="1" type="primary">rpl18</name>
    <name type="ordered locus">MmarC5_0160</name>
</gene>
<sequence length="193" mass="21379">MAKNAKFRVPFRRRREGKTDFRQRLGLLLSGKPRLVARKSLNNVTAQLMSYDEKGDVVLVSAHTKELVKMGYKGHCGNLPAAYLTGLLLGKKAVKEGAEEAILDKGLHRATKGAAIFAVLKGALDAGMDIPHGDEIIAEEERLNGTHVKNYAESLKEDADAYKKQFSKYLEKGLNPEDLPEHVAELKEKILNL</sequence>
<name>RL18_METM5</name>
<organism>
    <name type="scientific">Methanococcus maripaludis (strain C5 / ATCC BAA-1333)</name>
    <dbReference type="NCBI Taxonomy" id="402880"/>
    <lineage>
        <taxon>Archaea</taxon>
        <taxon>Methanobacteriati</taxon>
        <taxon>Methanobacteriota</taxon>
        <taxon>Methanomada group</taxon>
        <taxon>Methanococci</taxon>
        <taxon>Methanococcales</taxon>
        <taxon>Methanococcaceae</taxon>
        <taxon>Methanococcus</taxon>
    </lineage>
</organism>
<feature type="chain" id="PRO_1000053057" description="Large ribosomal subunit protein uL18">
    <location>
        <begin position="1"/>
        <end position="193"/>
    </location>
</feature>
<comment type="function">
    <text evidence="1">This is one of the proteins that bind and probably mediate the attachment of the 5S RNA into the large ribosomal subunit, where it forms part of the central protuberance.</text>
</comment>
<comment type="subunit">
    <text evidence="1">Part of the 50S ribosomal subunit. Contacts the 5S and 23S rRNAs.</text>
</comment>
<comment type="similarity">
    <text evidence="1">Belongs to the universal ribosomal protein uL18 family.</text>
</comment>
<dbReference type="EMBL" id="CP000609">
    <property type="protein sequence ID" value="ABO34477.1"/>
    <property type="molecule type" value="Genomic_DNA"/>
</dbReference>
<dbReference type="RefSeq" id="WP_011867937.1">
    <property type="nucleotide sequence ID" value="NC_009135.1"/>
</dbReference>
<dbReference type="SMR" id="A4FWA2"/>
<dbReference type="STRING" id="402880.MmarC5_0160"/>
<dbReference type="GeneID" id="4929301"/>
<dbReference type="KEGG" id="mmq:MmarC5_0160"/>
<dbReference type="eggNOG" id="arCOG04088">
    <property type="taxonomic scope" value="Archaea"/>
</dbReference>
<dbReference type="HOGENOM" id="CLU_056222_2_0_2"/>
<dbReference type="OrthoDB" id="8644at2157"/>
<dbReference type="Proteomes" id="UP000000253">
    <property type="component" value="Chromosome"/>
</dbReference>
<dbReference type="GO" id="GO:0022625">
    <property type="term" value="C:cytosolic large ribosomal subunit"/>
    <property type="evidence" value="ECO:0007669"/>
    <property type="project" value="TreeGrafter"/>
</dbReference>
<dbReference type="GO" id="GO:0008097">
    <property type="term" value="F:5S rRNA binding"/>
    <property type="evidence" value="ECO:0007669"/>
    <property type="project" value="InterPro"/>
</dbReference>
<dbReference type="GO" id="GO:0003735">
    <property type="term" value="F:structural constituent of ribosome"/>
    <property type="evidence" value="ECO:0007669"/>
    <property type="project" value="InterPro"/>
</dbReference>
<dbReference type="GO" id="GO:0000027">
    <property type="term" value="P:ribosomal large subunit assembly"/>
    <property type="evidence" value="ECO:0007669"/>
    <property type="project" value="TreeGrafter"/>
</dbReference>
<dbReference type="GO" id="GO:0006412">
    <property type="term" value="P:translation"/>
    <property type="evidence" value="ECO:0007669"/>
    <property type="project" value="UniProtKB-UniRule"/>
</dbReference>
<dbReference type="CDD" id="cd00432">
    <property type="entry name" value="Ribosomal_L18_L5e"/>
    <property type="match status" value="1"/>
</dbReference>
<dbReference type="Gene3D" id="3.30.420.100">
    <property type="match status" value="1"/>
</dbReference>
<dbReference type="HAMAP" id="MF_01337_A">
    <property type="entry name" value="Ribosomal_uL18_A"/>
    <property type="match status" value="1"/>
</dbReference>
<dbReference type="InterPro" id="IPR005485">
    <property type="entry name" value="Rbsml_uL18_euk"/>
</dbReference>
<dbReference type="NCBIfam" id="NF006342">
    <property type="entry name" value="PRK08569.1"/>
    <property type="match status" value="1"/>
</dbReference>
<dbReference type="PANTHER" id="PTHR23410:SF12">
    <property type="entry name" value="LARGE RIBOSOMAL SUBUNIT PROTEIN UL18"/>
    <property type="match status" value="1"/>
</dbReference>
<dbReference type="PANTHER" id="PTHR23410">
    <property type="entry name" value="RIBOSOMAL PROTEIN L5-RELATED"/>
    <property type="match status" value="1"/>
</dbReference>
<dbReference type="Pfam" id="PF17144">
    <property type="entry name" value="Ribosomal_L5e"/>
    <property type="match status" value="2"/>
</dbReference>
<dbReference type="SUPFAM" id="SSF53137">
    <property type="entry name" value="Translational machinery components"/>
    <property type="match status" value="1"/>
</dbReference>
<accession>A4FWA2</accession>
<evidence type="ECO:0000255" key="1">
    <source>
        <dbReference type="HAMAP-Rule" id="MF_01337"/>
    </source>
</evidence>
<evidence type="ECO:0000305" key="2"/>
<reference key="1">
    <citation type="submission" date="2007-03" db="EMBL/GenBank/DDBJ databases">
        <title>Complete sequence of chromosome of Methanococcus maripaludis C5.</title>
        <authorList>
            <consortium name="US DOE Joint Genome Institute"/>
            <person name="Copeland A."/>
            <person name="Lucas S."/>
            <person name="Lapidus A."/>
            <person name="Barry K."/>
            <person name="Glavina del Rio T."/>
            <person name="Dalin E."/>
            <person name="Tice H."/>
            <person name="Pitluck S."/>
            <person name="Chertkov O."/>
            <person name="Brettin T."/>
            <person name="Bruce D."/>
            <person name="Han C."/>
            <person name="Detter J.C."/>
            <person name="Schmutz J."/>
            <person name="Larimer F."/>
            <person name="Land M."/>
            <person name="Hauser L."/>
            <person name="Kyrpides N."/>
            <person name="Mikhailova N."/>
            <person name="Sieprawska-Lupa M."/>
            <person name="Whitman W.B."/>
            <person name="Richardson P."/>
        </authorList>
    </citation>
    <scope>NUCLEOTIDE SEQUENCE [LARGE SCALE GENOMIC DNA]</scope>
    <source>
        <strain>C5 / ATCC BAA-1333</strain>
    </source>
</reference>
<keyword id="KW-0687">Ribonucleoprotein</keyword>
<keyword id="KW-0689">Ribosomal protein</keyword>
<keyword id="KW-0694">RNA-binding</keyword>
<keyword id="KW-0699">rRNA-binding</keyword>